<protein>
    <recommendedName>
        <fullName evidence="1">FAD synthase</fullName>
        <ecNumber evidence="1">2.7.7.2</ecNumber>
    </recommendedName>
    <alternativeName>
        <fullName evidence="1">FMN adenylyltransferase</fullName>
    </alternativeName>
    <alternativeName>
        <fullName evidence="1">Flavin adenine dinucleotide synthase</fullName>
    </alternativeName>
</protein>
<reference key="1">
    <citation type="journal article" date="2008" name="Geobiology">
        <title>Electron microscopy encounters with unusual thermophiles helps direct genomic analysis of Aciduliprofundum boonei.</title>
        <authorList>
            <person name="Reysenbach A.L."/>
            <person name="Flores G.E."/>
        </authorList>
    </citation>
    <scope>NUCLEOTIDE SEQUENCE [LARGE SCALE GENOMIC DNA]</scope>
    <source>
        <strain>DSM 19572 / T469</strain>
    </source>
</reference>
<reference key="2">
    <citation type="submission" date="2010-02" db="EMBL/GenBank/DDBJ databases">
        <title>Complete sequence of Aciduliprofundum boonei T469.</title>
        <authorList>
            <person name="Lucas S."/>
            <person name="Copeland A."/>
            <person name="Lapidus A."/>
            <person name="Cheng J.-F."/>
            <person name="Bruce D."/>
            <person name="Goodwin L."/>
            <person name="Pitluck S."/>
            <person name="Saunders E."/>
            <person name="Detter J.C."/>
            <person name="Han C."/>
            <person name="Tapia R."/>
            <person name="Land M."/>
            <person name="Hauser L."/>
            <person name="Kyrpides N."/>
            <person name="Mikhailova N."/>
            <person name="Flores G."/>
            <person name="Reysenbach A.-L."/>
            <person name="Woyke T."/>
        </authorList>
    </citation>
    <scope>NUCLEOTIDE SEQUENCE [LARGE SCALE GENOMIC DNA]</scope>
    <source>
        <strain>DSM 19572 / T469</strain>
    </source>
</reference>
<name>RIBL_ACIB4</name>
<proteinExistence type="inferred from homology"/>
<organism>
    <name type="scientific">Aciduliprofundum boonei (strain DSM 19572 / T469)</name>
    <dbReference type="NCBI Taxonomy" id="439481"/>
    <lineage>
        <taxon>Archaea</taxon>
        <taxon>Methanobacteriati</taxon>
        <taxon>Thermoplasmatota</taxon>
        <taxon>DHVE2 group</taxon>
        <taxon>Candidatus Aciduliprofundum</taxon>
    </lineage>
</organism>
<dbReference type="EC" id="2.7.7.2" evidence="1"/>
<dbReference type="EMBL" id="DS990515">
    <property type="protein sequence ID" value="EDY37013.1"/>
    <property type="molecule type" value="Genomic_DNA"/>
</dbReference>
<dbReference type="EMBL" id="DS990517">
    <property type="protein sequence ID" value="EDY36241.1"/>
    <property type="molecule type" value="Genomic_DNA"/>
</dbReference>
<dbReference type="EMBL" id="CP001941">
    <property type="protein sequence ID" value="ADD08556.1"/>
    <property type="molecule type" value="Genomic_DNA"/>
</dbReference>
<dbReference type="RefSeq" id="WP_008082530.1">
    <property type="nucleotide sequence ID" value="NC_013926.1"/>
</dbReference>
<dbReference type="SMR" id="B5I9H4"/>
<dbReference type="STRING" id="439481.Aboo_0747"/>
<dbReference type="GeneID" id="8827694"/>
<dbReference type="KEGG" id="abi:Aboo_0747"/>
<dbReference type="eggNOG" id="arCOG01222">
    <property type="taxonomic scope" value="Archaea"/>
</dbReference>
<dbReference type="HOGENOM" id="CLU_034585_2_1_2"/>
<dbReference type="OrthoDB" id="1912at2157"/>
<dbReference type="UniPathway" id="UPA00277">
    <property type="reaction ID" value="UER00407"/>
</dbReference>
<dbReference type="Proteomes" id="UP000001400">
    <property type="component" value="Chromosome"/>
</dbReference>
<dbReference type="GO" id="GO:0005524">
    <property type="term" value="F:ATP binding"/>
    <property type="evidence" value="ECO:0007669"/>
    <property type="project" value="UniProtKB-UniRule"/>
</dbReference>
<dbReference type="GO" id="GO:0003919">
    <property type="term" value="F:FMN adenylyltransferase activity"/>
    <property type="evidence" value="ECO:0007669"/>
    <property type="project" value="UniProtKB-UniRule"/>
</dbReference>
<dbReference type="GO" id="GO:0006747">
    <property type="term" value="P:FAD biosynthetic process"/>
    <property type="evidence" value="ECO:0007669"/>
    <property type="project" value="UniProtKB-UniRule"/>
</dbReference>
<dbReference type="GO" id="GO:0046444">
    <property type="term" value="P:FMN metabolic process"/>
    <property type="evidence" value="ECO:0007669"/>
    <property type="project" value="UniProtKB-UniRule"/>
</dbReference>
<dbReference type="Gene3D" id="3.40.50.620">
    <property type="entry name" value="HUPs"/>
    <property type="match status" value="1"/>
</dbReference>
<dbReference type="HAMAP" id="MF_02115">
    <property type="entry name" value="FAD_synth_arch"/>
    <property type="match status" value="1"/>
</dbReference>
<dbReference type="InterPro" id="IPR050385">
    <property type="entry name" value="Archaeal_FAD_synthase"/>
</dbReference>
<dbReference type="InterPro" id="IPR004821">
    <property type="entry name" value="Cyt_trans-like"/>
</dbReference>
<dbReference type="InterPro" id="IPR024902">
    <property type="entry name" value="FAD_synth_RibL"/>
</dbReference>
<dbReference type="InterPro" id="IPR014729">
    <property type="entry name" value="Rossmann-like_a/b/a_fold"/>
</dbReference>
<dbReference type="NCBIfam" id="TIGR00125">
    <property type="entry name" value="cyt_tran_rel"/>
    <property type="match status" value="1"/>
</dbReference>
<dbReference type="PANTHER" id="PTHR43793">
    <property type="entry name" value="FAD SYNTHASE"/>
    <property type="match status" value="1"/>
</dbReference>
<dbReference type="PANTHER" id="PTHR43793:SF1">
    <property type="entry name" value="FAD SYNTHASE"/>
    <property type="match status" value="1"/>
</dbReference>
<dbReference type="Pfam" id="PF01467">
    <property type="entry name" value="CTP_transf_like"/>
    <property type="match status" value="1"/>
</dbReference>
<dbReference type="SUPFAM" id="SSF52374">
    <property type="entry name" value="Nucleotidylyl transferase"/>
    <property type="match status" value="1"/>
</dbReference>
<gene>
    <name evidence="1" type="primary">ribL</name>
    <name type="ordered locus">Aboo_0747</name>
    <name type="ORF">ABOONEI_1934</name>
    <name type="ORF">ABOONEI_2228</name>
</gene>
<comment type="function">
    <text evidence="1">Catalyzes the transfer of the AMP portion of ATP to flavin mononucleotide (FMN) to produce flavin adenine dinucleotide (FAD) coenzyme.</text>
</comment>
<comment type="catalytic activity">
    <reaction evidence="1">
        <text>FMN + ATP + H(+) = FAD + diphosphate</text>
        <dbReference type="Rhea" id="RHEA:17237"/>
        <dbReference type="ChEBI" id="CHEBI:15378"/>
        <dbReference type="ChEBI" id="CHEBI:30616"/>
        <dbReference type="ChEBI" id="CHEBI:33019"/>
        <dbReference type="ChEBI" id="CHEBI:57692"/>
        <dbReference type="ChEBI" id="CHEBI:58210"/>
        <dbReference type="EC" id="2.7.7.2"/>
    </reaction>
</comment>
<comment type="cofactor">
    <cofactor evidence="1">
        <name>a divalent metal cation</name>
        <dbReference type="ChEBI" id="CHEBI:60240"/>
    </cofactor>
</comment>
<comment type="pathway">
    <text evidence="1">Cofactor biosynthesis; FAD biosynthesis; FAD from FMN: step 1/1.</text>
</comment>
<comment type="subunit">
    <text evidence="1">Homodimer.</text>
</comment>
<comment type="similarity">
    <text evidence="1">Belongs to the archaeal FAD synthase family.</text>
</comment>
<feature type="chain" id="PRO_0000406231" description="FAD synthase">
    <location>
        <begin position="1"/>
        <end position="149"/>
    </location>
</feature>
<feature type="binding site" evidence="1">
    <location>
        <begin position="9"/>
        <end position="10"/>
    </location>
    <ligand>
        <name>ATP</name>
        <dbReference type="ChEBI" id="CHEBI:30616"/>
    </ligand>
</feature>
<feature type="binding site" evidence="1">
    <location>
        <begin position="14"/>
        <end position="17"/>
    </location>
    <ligand>
        <name>ATP</name>
        <dbReference type="ChEBI" id="CHEBI:30616"/>
    </ligand>
</feature>
<feature type="binding site" evidence="1">
    <location>
        <position position="93"/>
    </location>
    <ligand>
        <name>ATP</name>
        <dbReference type="ChEBI" id="CHEBI:30616"/>
    </ligand>
</feature>
<feature type="binding site" evidence="1">
    <location>
        <position position="120"/>
    </location>
    <ligand>
        <name>ATP</name>
        <dbReference type="ChEBI" id="CHEBI:30616"/>
    </ligand>
</feature>
<feature type="sequence conflict" description="In Ref. 1; EDY36241." evidence="2" ref="1">
    <original>R</original>
    <variation>K</variation>
    <location>
        <position position="25"/>
    </location>
</feature>
<feature type="sequence conflict" description="In Ref. 1; EDY36241." evidence="2" ref="1">
    <original>D</original>
    <variation>E</variation>
    <location>
        <position position="53"/>
    </location>
</feature>
<evidence type="ECO:0000255" key="1">
    <source>
        <dbReference type="HAMAP-Rule" id="MF_02115"/>
    </source>
</evidence>
<evidence type="ECO:0000305" key="2"/>
<sequence>MVRVMATGVFDILHPGHVLFLREARKLGDELVVVVARDSTVERLKHKPIMNEDIRRFMVESLKPVDRAVLGHKDDMYKTVEDVRPDIIVLGYDQKFDEKEIEEECRKRGIKVKVVRLKKYGDSDLNGTRKIIFKIVDRVDDLYAKDRNS</sequence>
<accession>B5I9H4</accession>
<accession>B5IC32</accession>
<keyword id="KW-0067">ATP-binding</keyword>
<keyword id="KW-0274">FAD</keyword>
<keyword id="KW-0285">Flavoprotein</keyword>
<keyword id="KW-0288">FMN</keyword>
<keyword id="KW-0547">Nucleotide-binding</keyword>
<keyword id="KW-0548">Nucleotidyltransferase</keyword>
<keyword id="KW-1185">Reference proteome</keyword>
<keyword id="KW-0808">Transferase</keyword>